<reference key="1">
    <citation type="journal article" date="2003" name="Proc. Natl. Acad. Sci. U.S.A.">
        <title>Complete genome sequence and analysis of Wolinella succinogenes.</title>
        <authorList>
            <person name="Baar C."/>
            <person name="Eppinger M."/>
            <person name="Raddatz G."/>
            <person name="Simon J."/>
            <person name="Lanz C."/>
            <person name="Klimmek O."/>
            <person name="Nandakumar R."/>
            <person name="Gross R."/>
            <person name="Rosinus A."/>
            <person name="Keller H."/>
            <person name="Jagtap P."/>
            <person name="Linke B."/>
            <person name="Meyer F."/>
            <person name="Lederer H."/>
            <person name="Schuster S.C."/>
        </authorList>
    </citation>
    <scope>NUCLEOTIDE SEQUENCE [LARGE SCALE GENOMIC DNA]</scope>
    <source>
        <strain>ATCC 29543 / DSM 1740 / CCUG 13145 / JCM 31913 / LMG 7466 / NCTC 11488 / FDC 602W</strain>
    </source>
</reference>
<evidence type="ECO:0000255" key="1">
    <source>
        <dbReference type="HAMAP-Rule" id="MF_00533"/>
    </source>
</evidence>
<feature type="chain" id="PRO_1000211895" description="Nitrogenase iron protein">
    <location>
        <begin position="1"/>
        <end position="303"/>
    </location>
</feature>
<feature type="binding site" evidence="1">
    <location>
        <begin position="11"/>
        <end position="18"/>
    </location>
    <ligand>
        <name>ATP</name>
        <dbReference type="ChEBI" id="CHEBI:30616"/>
    </ligand>
</feature>
<feature type="binding site" evidence="1">
    <location>
        <position position="112"/>
    </location>
    <ligand>
        <name>[4Fe-4S] cluster</name>
        <dbReference type="ChEBI" id="CHEBI:49883"/>
        <note>ligand shared between dimeric partners</note>
    </ligand>
</feature>
<feature type="binding site" evidence="1">
    <location>
        <position position="147"/>
    </location>
    <ligand>
        <name>[4Fe-4S] cluster</name>
        <dbReference type="ChEBI" id="CHEBI:49883"/>
        <note>ligand shared between dimeric partners</note>
    </ligand>
</feature>
<feature type="modified residue" description="ADP-ribosylarginine; by dinitrogenase reductase ADP-ribosyltransferase" evidence="1">
    <location>
        <position position="115"/>
    </location>
</feature>
<sequence length="303" mass="32832">MAGLRQIAFYGKGGIGKSTTSQNTLAAMAYYFGKKILIVGCDPKADSTRLILHEKAQSTIMQLAAEVGTVEDLELEDVCKPGAGPFNPEQPSPSGGWIKCAESGGPEPGVGCAGRGVITAINFLEEEGAYSDELDFVSYDVLGDVVCGGFAMPIREGKAQEIYIVMSGEMMAMYAANNISRGILKYASSGGVRLAGLICNARMTDREYDLANALATKLGTQMIHFVPRHNIVQHAELRRMTVVEYAETSTQAEEYKELARKIVHNDLKVIPTPMNMDDLESLLMEFGIAEQFDEENVGKKAEA</sequence>
<comment type="function">
    <text evidence="1">The key enzymatic reactions in nitrogen fixation are catalyzed by the nitrogenase complex, which has 2 components: the iron protein and the molybdenum-iron protein.</text>
</comment>
<comment type="catalytic activity">
    <reaction evidence="1">
        <text>N2 + 8 reduced [2Fe-2S]-[ferredoxin] + 16 ATP + 16 H2O = H2 + 8 oxidized [2Fe-2S]-[ferredoxin] + 2 NH4(+) + 16 ADP + 16 phosphate + 6 H(+)</text>
        <dbReference type="Rhea" id="RHEA:21448"/>
        <dbReference type="Rhea" id="RHEA-COMP:10000"/>
        <dbReference type="Rhea" id="RHEA-COMP:10001"/>
        <dbReference type="ChEBI" id="CHEBI:15377"/>
        <dbReference type="ChEBI" id="CHEBI:15378"/>
        <dbReference type="ChEBI" id="CHEBI:17997"/>
        <dbReference type="ChEBI" id="CHEBI:18276"/>
        <dbReference type="ChEBI" id="CHEBI:28938"/>
        <dbReference type="ChEBI" id="CHEBI:30616"/>
        <dbReference type="ChEBI" id="CHEBI:33737"/>
        <dbReference type="ChEBI" id="CHEBI:33738"/>
        <dbReference type="ChEBI" id="CHEBI:43474"/>
        <dbReference type="ChEBI" id="CHEBI:456216"/>
        <dbReference type="EC" id="1.18.6.1"/>
    </reaction>
</comment>
<comment type="cofactor">
    <cofactor evidence="1">
        <name>[4Fe-4S] cluster</name>
        <dbReference type="ChEBI" id="CHEBI:49883"/>
    </cofactor>
    <text evidence="1">Binds 1 [4Fe-4S] cluster per dimer.</text>
</comment>
<comment type="subunit">
    <text evidence="1">Homodimer.</text>
</comment>
<comment type="PTM">
    <text evidence="1">The reversible ADP-ribosylation of Arg-115 inactivates the nitrogenase reductase and regulates nitrogenase activity.</text>
</comment>
<comment type="similarity">
    <text evidence="1">Belongs to the NifH/BchL/ChlL family.</text>
</comment>
<accession>Q7M8U8</accession>
<organism>
    <name type="scientific">Wolinella succinogenes (strain ATCC 29543 / DSM 1740 / CCUG 13145 / JCM 31913 / LMG 7466 / NCTC 11488 / FDC 602W)</name>
    <name type="common">Vibrio succinogenes</name>
    <dbReference type="NCBI Taxonomy" id="273121"/>
    <lineage>
        <taxon>Bacteria</taxon>
        <taxon>Pseudomonadati</taxon>
        <taxon>Campylobacterota</taxon>
        <taxon>Epsilonproteobacteria</taxon>
        <taxon>Campylobacterales</taxon>
        <taxon>Helicobacteraceae</taxon>
        <taxon>Wolinella</taxon>
    </lineage>
</organism>
<dbReference type="EC" id="1.18.6.1" evidence="1"/>
<dbReference type="EMBL" id="BX571660">
    <property type="protein sequence ID" value="CAE10460.1"/>
    <property type="molecule type" value="Genomic_DNA"/>
</dbReference>
<dbReference type="RefSeq" id="WP_011139245.1">
    <property type="nucleotide sequence ID" value="NC_005090.1"/>
</dbReference>
<dbReference type="SMR" id="Q7M8U8"/>
<dbReference type="STRING" id="273121.WS1394"/>
<dbReference type="KEGG" id="wsu:WS1394"/>
<dbReference type="eggNOG" id="COG1348">
    <property type="taxonomic scope" value="Bacteria"/>
</dbReference>
<dbReference type="HOGENOM" id="CLU_059373_0_0_7"/>
<dbReference type="Proteomes" id="UP000000422">
    <property type="component" value="Chromosome"/>
</dbReference>
<dbReference type="GO" id="GO:0051539">
    <property type="term" value="F:4 iron, 4 sulfur cluster binding"/>
    <property type="evidence" value="ECO:0007669"/>
    <property type="project" value="UniProtKB-KW"/>
</dbReference>
<dbReference type="GO" id="GO:0005524">
    <property type="term" value="F:ATP binding"/>
    <property type="evidence" value="ECO:0007669"/>
    <property type="project" value="UniProtKB-UniRule"/>
</dbReference>
<dbReference type="GO" id="GO:0046872">
    <property type="term" value="F:metal ion binding"/>
    <property type="evidence" value="ECO:0007669"/>
    <property type="project" value="UniProtKB-KW"/>
</dbReference>
<dbReference type="GO" id="GO:0016163">
    <property type="term" value="F:nitrogenase activity"/>
    <property type="evidence" value="ECO:0007669"/>
    <property type="project" value="UniProtKB-UniRule"/>
</dbReference>
<dbReference type="GO" id="GO:0009399">
    <property type="term" value="P:nitrogen fixation"/>
    <property type="evidence" value="ECO:0007669"/>
    <property type="project" value="UniProtKB-UniRule"/>
</dbReference>
<dbReference type="CDD" id="cd02040">
    <property type="entry name" value="NifH"/>
    <property type="match status" value="1"/>
</dbReference>
<dbReference type="FunFam" id="3.40.50.300:FF:001379">
    <property type="entry name" value="Nitrogenase iron protein 1"/>
    <property type="match status" value="1"/>
</dbReference>
<dbReference type="Gene3D" id="3.40.50.300">
    <property type="entry name" value="P-loop containing nucleotide triphosphate hydrolases"/>
    <property type="match status" value="1"/>
</dbReference>
<dbReference type="HAMAP" id="MF_00533">
    <property type="entry name" value="NifH"/>
    <property type="match status" value="1"/>
</dbReference>
<dbReference type="InterPro" id="IPR030655">
    <property type="entry name" value="NifH/chlL_CS"/>
</dbReference>
<dbReference type="InterPro" id="IPR000392">
    <property type="entry name" value="NifH/frxC"/>
</dbReference>
<dbReference type="InterPro" id="IPR005977">
    <property type="entry name" value="Nitrogenase_Fe_NifH"/>
</dbReference>
<dbReference type="InterPro" id="IPR027417">
    <property type="entry name" value="P-loop_NTPase"/>
</dbReference>
<dbReference type="NCBIfam" id="TIGR01287">
    <property type="entry name" value="nifH"/>
    <property type="match status" value="1"/>
</dbReference>
<dbReference type="PANTHER" id="PTHR42864">
    <property type="entry name" value="LIGHT-INDEPENDENT PROTOCHLOROPHYLLIDE REDUCTASE IRON-SULFUR ATP-BINDING PROTEIN"/>
    <property type="match status" value="1"/>
</dbReference>
<dbReference type="PANTHER" id="PTHR42864:SF2">
    <property type="entry name" value="LIGHT-INDEPENDENT PROTOCHLOROPHYLLIDE REDUCTASE IRON-SULFUR ATP-BINDING PROTEIN"/>
    <property type="match status" value="1"/>
</dbReference>
<dbReference type="Pfam" id="PF00142">
    <property type="entry name" value="Fer4_NifH"/>
    <property type="match status" value="1"/>
</dbReference>
<dbReference type="PIRSF" id="PIRSF000363">
    <property type="entry name" value="Nitrogenase_iron"/>
    <property type="match status" value="1"/>
</dbReference>
<dbReference type="PRINTS" id="PR00091">
    <property type="entry name" value="NITROGNASEII"/>
</dbReference>
<dbReference type="SUPFAM" id="SSF52540">
    <property type="entry name" value="P-loop containing nucleoside triphosphate hydrolases"/>
    <property type="match status" value="1"/>
</dbReference>
<dbReference type="PROSITE" id="PS00746">
    <property type="entry name" value="NIFH_FRXC_1"/>
    <property type="match status" value="1"/>
</dbReference>
<dbReference type="PROSITE" id="PS00692">
    <property type="entry name" value="NIFH_FRXC_2"/>
    <property type="match status" value="1"/>
</dbReference>
<dbReference type="PROSITE" id="PS51026">
    <property type="entry name" value="NIFH_FRXC_3"/>
    <property type="match status" value="1"/>
</dbReference>
<proteinExistence type="inferred from homology"/>
<keyword id="KW-0004">4Fe-4S</keyword>
<keyword id="KW-0013">ADP-ribosylation</keyword>
<keyword id="KW-0067">ATP-binding</keyword>
<keyword id="KW-0408">Iron</keyword>
<keyword id="KW-0411">Iron-sulfur</keyword>
<keyword id="KW-0479">Metal-binding</keyword>
<keyword id="KW-0535">Nitrogen fixation</keyword>
<keyword id="KW-0547">Nucleotide-binding</keyword>
<keyword id="KW-0560">Oxidoreductase</keyword>
<keyword id="KW-1185">Reference proteome</keyword>
<protein>
    <recommendedName>
        <fullName evidence="1">Nitrogenase iron protein</fullName>
        <ecNumber evidence="1">1.18.6.1</ecNumber>
    </recommendedName>
    <alternativeName>
        <fullName evidence="1">Nitrogenase Fe protein</fullName>
    </alternativeName>
    <alternativeName>
        <fullName evidence="1">Nitrogenase component II</fullName>
    </alternativeName>
    <alternativeName>
        <fullName evidence="1">Nitrogenase reductase</fullName>
    </alternativeName>
</protein>
<name>NIFH_WOLSU</name>
<gene>
    <name evidence="1" type="primary">nifH</name>
    <name type="ordered locus">WS1394</name>
</gene>